<protein>
    <recommendedName>
        <fullName evidence="2">Large ribosomal subunit protein bL27c</fullName>
    </recommendedName>
    <alternativeName>
        <fullName>50S ribosomal protein L27, chloroplastic</fullName>
    </alternativeName>
    <alternativeName>
        <fullName>CL27</fullName>
    </alternativeName>
</protein>
<evidence type="ECO:0000269" key="1">
    <source>
    </source>
</evidence>
<evidence type="ECO:0000305" key="2"/>
<name>RK27_TOBAC</name>
<gene>
    <name type="primary">RPL27</name>
    <name type="synonym">RPL27A</name>
</gene>
<reference key="1">
    <citation type="journal article" date="1992" name="Biochemistry">
        <title>Nuclear-encoded chloroplast ribosomal protein L27 of Nicotiana tabacum: cDNA sequence and analysis of mRNA and genes.</title>
        <authorList>
            <person name="Elhag G.A."/>
            <person name="Bourque D.P."/>
        </authorList>
    </citation>
    <scope>NUCLEOTIDE SEQUENCE [MRNA]</scope>
    <scope>PROTEIN SEQUENCE OF 52-68</scope>
    <source>
        <strain>cv. Petit Havana</strain>
        <tissue>Leaf</tissue>
    </source>
</reference>
<keyword id="KW-0150">Chloroplast</keyword>
<keyword id="KW-0903">Direct protein sequencing</keyword>
<keyword id="KW-0934">Plastid</keyword>
<keyword id="KW-1185">Reference proteome</keyword>
<keyword id="KW-0687">Ribonucleoprotein</keyword>
<keyword id="KW-0689">Ribosomal protein</keyword>
<keyword id="KW-0809">Transit peptide</keyword>
<accession>P30155</accession>
<feature type="transit peptide" description="Chloroplast" evidence="1">
    <location>
        <begin position="1"/>
        <end position="51"/>
    </location>
</feature>
<feature type="chain" id="PRO_0000030495" description="Large ribosomal subunit protein bL27c">
    <location>
        <begin position="52"/>
        <end position="179"/>
    </location>
</feature>
<comment type="subunit">
    <text>Part of the 50S ribosomal subunit.</text>
</comment>
<comment type="subcellular location">
    <subcellularLocation>
        <location>Plastid</location>
        <location>Chloroplast</location>
    </subcellularLocation>
</comment>
<comment type="similarity">
    <text evidence="2">Belongs to the bacterial ribosomal protein bL27 family.</text>
</comment>
<organism>
    <name type="scientific">Nicotiana tabacum</name>
    <name type="common">Common tobacco</name>
    <dbReference type="NCBI Taxonomy" id="4097"/>
    <lineage>
        <taxon>Eukaryota</taxon>
        <taxon>Viridiplantae</taxon>
        <taxon>Streptophyta</taxon>
        <taxon>Embryophyta</taxon>
        <taxon>Tracheophyta</taxon>
        <taxon>Spermatophyta</taxon>
        <taxon>Magnoliopsida</taxon>
        <taxon>eudicotyledons</taxon>
        <taxon>Gunneridae</taxon>
        <taxon>Pentapetalae</taxon>
        <taxon>asterids</taxon>
        <taxon>lamiids</taxon>
        <taxon>Solanales</taxon>
        <taxon>Solanaceae</taxon>
        <taxon>Nicotianoideae</taxon>
        <taxon>Nicotianeae</taxon>
        <taxon>Nicotiana</taxon>
    </lineage>
</organism>
<sequence>MAVSFSLVGAFKGLSLASSSSFLKGDFGAAFPVAPKFSVSFPLKSPLTIESAHKKGAGSTKNGRDSPGQRLGVKIFGDQVAKPGSIIVRQRGTKFHPGKNVGLGKDHTIFSLIDGLVKFEKFGPDRKKISVYPREVQPENPNSYRNRKRESFRLQRERRKARREGVILQSSVDTCFCCC</sequence>
<dbReference type="EMBL" id="M75731">
    <property type="protein sequence ID" value="AAA34115.1"/>
    <property type="molecule type" value="mRNA"/>
</dbReference>
<dbReference type="EMBL" id="M98473">
    <property type="protein sequence ID" value="AAA34104.1"/>
    <property type="molecule type" value="mRNA"/>
</dbReference>
<dbReference type="PIR" id="A42840">
    <property type="entry name" value="A42840"/>
</dbReference>
<dbReference type="SMR" id="P30155"/>
<dbReference type="STRING" id="4097.P30155"/>
<dbReference type="PaxDb" id="4097-P30155"/>
<dbReference type="Proteomes" id="UP000084051">
    <property type="component" value="Unplaced"/>
</dbReference>
<dbReference type="GO" id="GO:0009507">
    <property type="term" value="C:chloroplast"/>
    <property type="evidence" value="ECO:0007669"/>
    <property type="project" value="UniProtKB-SubCell"/>
</dbReference>
<dbReference type="GO" id="GO:1990904">
    <property type="term" value="C:ribonucleoprotein complex"/>
    <property type="evidence" value="ECO:0007669"/>
    <property type="project" value="UniProtKB-KW"/>
</dbReference>
<dbReference type="GO" id="GO:0005840">
    <property type="term" value="C:ribosome"/>
    <property type="evidence" value="ECO:0007669"/>
    <property type="project" value="UniProtKB-KW"/>
</dbReference>
<dbReference type="GO" id="GO:0003735">
    <property type="term" value="F:structural constituent of ribosome"/>
    <property type="evidence" value="ECO:0000318"/>
    <property type="project" value="GO_Central"/>
</dbReference>
<dbReference type="GO" id="GO:0006412">
    <property type="term" value="P:translation"/>
    <property type="evidence" value="ECO:0007669"/>
    <property type="project" value="InterPro"/>
</dbReference>
<dbReference type="FunFam" id="2.40.50.100:FF:000051">
    <property type="entry name" value="50S ribosomal protein L27"/>
    <property type="match status" value="1"/>
</dbReference>
<dbReference type="Gene3D" id="2.40.50.100">
    <property type="match status" value="1"/>
</dbReference>
<dbReference type="HAMAP" id="MF_00539">
    <property type="entry name" value="Ribosomal_bL27"/>
    <property type="match status" value="1"/>
</dbReference>
<dbReference type="InterPro" id="IPR001684">
    <property type="entry name" value="Ribosomal_bL27"/>
</dbReference>
<dbReference type="InterPro" id="IPR018261">
    <property type="entry name" value="Ribosomal_bL27_CS"/>
</dbReference>
<dbReference type="NCBIfam" id="TIGR00062">
    <property type="entry name" value="L27"/>
    <property type="match status" value="1"/>
</dbReference>
<dbReference type="PANTHER" id="PTHR15893:SF0">
    <property type="entry name" value="LARGE RIBOSOMAL SUBUNIT PROTEIN BL27M"/>
    <property type="match status" value="1"/>
</dbReference>
<dbReference type="PANTHER" id="PTHR15893">
    <property type="entry name" value="RIBOSOMAL PROTEIN L27"/>
    <property type="match status" value="1"/>
</dbReference>
<dbReference type="Pfam" id="PF01016">
    <property type="entry name" value="Ribosomal_L27"/>
    <property type="match status" value="1"/>
</dbReference>
<dbReference type="PRINTS" id="PR00063">
    <property type="entry name" value="RIBOSOMALL27"/>
</dbReference>
<dbReference type="SUPFAM" id="SSF110324">
    <property type="entry name" value="Ribosomal L27 protein-like"/>
    <property type="match status" value="1"/>
</dbReference>
<dbReference type="PROSITE" id="PS00831">
    <property type="entry name" value="RIBOSOMAL_L27"/>
    <property type="match status" value="1"/>
</dbReference>
<proteinExistence type="evidence at protein level"/>